<comment type="function">
    <text evidence="1">Catalyzes the decarboxylation of orotidine 5'-monophosphate (OMP) to uridine 5'-monophosphate (UMP).</text>
</comment>
<comment type="catalytic activity">
    <reaction evidence="1">
        <text>orotidine 5'-phosphate + H(+) = UMP + CO2</text>
        <dbReference type="Rhea" id="RHEA:11596"/>
        <dbReference type="ChEBI" id="CHEBI:15378"/>
        <dbReference type="ChEBI" id="CHEBI:16526"/>
        <dbReference type="ChEBI" id="CHEBI:57538"/>
        <dbReference type="ChEBI" id="CHEBI:57865"/>
        <dbReference type="EC" id="4.1.1.23"/>
    </reaction>
</comment>
<comment type="pathway">
    <text evidence="1">Pyrimidine metabolism; UMP biosynthesis via de novo pathway; UMP from orotate: step 2/2.</text>
</comment>
<comment type="subunit">
    <text evidence="1">Homodimer.</text>
</comment>
<comment type="similarity">
    <text evidence="1">Belongs to the OMP decarboxylase family. Type 1 subfamily.</text>
</comment>
<proteinExistence type="inferred from homology"/>
<accession>Q57AD4</accession>
<gene>
    <name evidence="1" type="primary">pyrF</name>
    <name type="ordered locus">BruAb1_2103</name>
</gene>
<organism>
    <name type="scientific">Brucella abortus biovar 1 (strain 9-941)</name>
    <dbReference type="NCBI Taxonomy" id="262698"/>
    <lineage>
        <taxon>Bacteria</taxon>
        <taxon>Pseudomonadati</taxon>
        <taxon>Pseudomonadota</taxon>
        <taxon>Alphaproteobacteria</taxon>
        <taxon>Hyphomicrobiales</taxon>
        <taxon>Brucellaceae</taxon>
        <taxon>Brucella/Ochrobactrum group</taxon>
        <taxon>Brucella</taxon>
    </lineage>
</organism>
<evidence type="ECO:0000255" key="1">
    <source>
        <dbReference type="HAMAP-Rule" id="MF_01200"/>
    </source>
</evidence>
<keyword id="KW-0210">Decarboxylase</keyword>
<keyword id="KW-0456">Lyase</keyword>
<keyword id="KW-0665">Pyrimidine biosynthesis</keyword>
<sequence length="238" mass="25193">MTTELHDDASGRLIVGLDVPTIAEAEKVVEELGNAVSFYKIGYQLVFAGGLDFAKSLVAARKKVFLDMKLLDIDNTIAKGVENVAKMGVSMLTLHAYPKAMRAAVEAARGSDLCLLGVTVLTSMDNADLREAGYFDNAETLVLKRARQAHEAGMGGIVASAVEAQAIRQAVRPDMAIVTPGIRPAGSEKGDQKRVMTPADALRAGASHLIVARPIVGAPDRKAAALAILKEMRSIGRS</sequence>
<protein>
    <recommendedName>
        <fullName evidence="1">Orotidine 5'-phosphate decarboxylase</fullName>
        <ecNumber evidence="1">4.1.1.23</ecNumber>
    </recommendedName>
    <alternativeName>
        <fullName evidence="1">OMP decarboxylase</fullName>
        <shortName evidence="1">OMPDCase</shortName>
        <shortName evidence="1">OMPdecase</shortName>
    </alternativeName>
</protein>
<reference key="1">
    <citation type="journal article" date="2005" name="J. Bacteriol.">
        <title>Completion of the genome sequence of Brucella abortus and comparison to the highly similar genomes of Brucella melitensis and Brucella suis.</title>
        <authorList>
            <person name="Halling S.M."/>
            <person name="Peterson-Burch B.D."/>
            <person name="Bricker B.J."/>
            <person name="Zuerner R.L."/>
            <person name="Qing Z."/>
            <person name="Li L.-L."/>
            <person name="Kapur V."/>
            <person name="Alt D.P."/>
            <person name="Olsen S.C."/>
        </authorList>
    </citation>
    <scope>NUCLEOTIDE SEQUENCE [LARGE SCALE GENOMIC DNA]</scope>
    <source>
        <strain>9-941</strain>
    </source>
</reference>
<name>PYRF_BRUAB</name>
<dbReference type="EC" id="4.1.1.23" evidence="1"/>
<dbReference type="EMBL" id="AE017223">
    <property type="protein sequence ID" value="AAX75400.1"/>
    <property type="molecule type" value="Genomic_DNA"/>
</dbReference>
<dbReference type="RefSeq" id="WP_002965193.1">
    <property type="nucleotide sequence ID" value="NC_006932.1"/>
</dbReference>
<dbReference type="SMR" id="Q57AD4"/>
<dbReference type="EnsemblBacteria" id="AAX75400">
    <property type="protein sequence ID" value="AAX75400"/>
    <property type="gene ID" value="BruAb1_2103"/>
</dbReference>
<dbReference type="GeneID" id="93017565"/>
<dbReference type="KEGG" id="bmb:BruAb1_2103"/>
<dbReference type="HOGENOM" id="CLU_067069_1_0_5"/>
<dbReference type="UniPathway" id="UPA00070">
    <property type="reaction ID" value="UER00120"/>
</dbReference>
<dbReference type="Proteomes" id="UP000000540">
    <property type="component" value="Chromosome I"/>
</dbReference>
<dbReference type="GO" id="GO:0005829">
    <property type="term" value="C:cytosol"/>
    <property type="evidence" value="ECO:0007669"/>
    <property type="project" value="TreeGrafter"/>
</dbReference>
<dbReference type="GO" id="GO:0004590">
    <property type="term" value="F:orotidine-5'-phosphate decarboxylase activity"/>
    <property type="evidence" value="ECO:0007669"/>
    <property type="project" value="UniProtKB-UniRule"/>
</dbReference>
<dbReference type="GO" id="GO:0006207">
    <property type="term" value="P:'de novo' pyrimidine nucleobase biosynthetic process"/>
    <property type="evidence" value="ECO:0007669"/>
    <property type="project" value="InterPro"/>
</dbReference>
<dbReference type="GO" id="GO:0044205">
    <property type="term" value="P:'de novo' UMP biosynthetic process"/>
    <property type="evidence" value="ECO:0007669"/>
    <property type="project" value="UniProtKB-UniRule"/>
</dbReference>
<dbReference type="CDD" id="cd04725">
    <property type="entry name" value="OMP_decarboxylase_like"/>
    <property type="match status" value="1"/>
</dbReference>
<dbReference type="Gene3D" id="3.20.20.70">
    <property type="entry name" value="Aldolase class I"/>
    <property type="match status" value="1"/>
</dbReference>
<dbReference type="HAMAP" id="MF_01200_B">
    <property type="entry name" value="OMPdecase_type1_B"/>
    <property type="match status" value="1"/>
</dbReference>
<dbReference type="InterPro" id="IPR013785">
    <property type="entry name" value="Aldolase_TIM"/>
</dbReference>
<dbReference type="InterPro" id="IPR014732">
    <property type="entry name" value="OMPdecase"/>
</dbReference>
<dbReference type="InterPro" id="IPR018089">
    <property type="entry name" value="OMPdecase_AS"/>
</dbReference>
<dbReference type="InterPro" id="IPR047596">
    <property type="entry name" value="OMPdecase_bac"/>
</dbReference>
<dbReference type="InterPro" id="IPR001754">
    <property type="entry name" value="OMPdeCOase_dom"/>
</dbReference>
<dbReference type="InterPro" id="IPR011060">
    <property type="entry name" value="RibuloseP-bd_barrel"/>
</dbReference>
<dbReference type="NCBIfam" id="NF001273">
    <property type="entry name" value="PRK00230.1"/>
    <property type="match status" value="1"/>
</dbReference>
<dbReference type="NCBIfam" id="TIGR01740">
    <property type="entry name" value="pyrF"/>
    <property type="match status" value="1"/>
</dbReference>
<dbReference type="PANTHER" id="PTHR32119">
    <property type="entry name" value="OROTIDINE 5'-PHOSPHATE DECARBOXYLASE"/>
    <property type="match status" value="1"/>
</dbReference>
<dbReference type="PANTHER" id="PTHR32119:SF2">
    <property type="entry name" value="OROTIDINE 5'-PHOSPHATE DECARBOXYLASE"/>
    <property type="match status" value="1"/>
</dbReference>
<dbReference type="Pfam" id="PF00215">
    <property type="entry name" value="OMPdecase"/>
    <property type="match status" value="1"/>
</dbReference>
<dbReference type="SMART" id="SM00934">
    <property type="entry name" value="OMPdecase"/>
    <property type="match status" value="1"/>
</dbReference>
<dbReference type="SUPFAM" id="SSF51366">
    <property type="entry name" value="Ribulose-phoshate binding barrel"/>
    <property type="match status" value="1"/>
</dbReference>
<dbReference type="PROSITE" id="PS00156">
    <property type="entry name" value="OMPDECASE"/>
    <property type="match status" value="1"/>
</dbReference>
<feature type="chain" id="PRO_0000241849" description="Orotidine 5'-phosphate decarboxylase">
    <location>
        <begin position="1"/>
        <end position="238"/>
    </location>
</feature>
<feature type="active site" description="Proton donor" evidence="1">
    <location>
        <position position="69"/>
    </location>
</feature>
<feature type="binding site" evidence="1">
    <location>
        <position position="18"/>
    </location>
    <ligand>
        <name>substrate</name>
    </ligand>
</feature>
<feature type="binding site" evidence="1">
    <location>
        <position position="40"/>
    </location>
    <ligand>
        <name>substrate</name>
    </ligand>
</feature>
<feature type="binding site" evidence="1">
    <location>
        <begin position="67"/>
        <end position="76"/>
    </location>
    <ligand>
        <name>substrate</name>
    </ligand>
</feature>
<feature type="binding site" evidence="1">
    <location>
        <position position="122"/>
    </location>
    <ligand>
        <name>substrate</name>
    </ligand>
</feature>
<feature type="binding site" evidence="1">
    <location>
        <position position="183"/>
    </location>
    <ligand>
        <name>substrate</name>
    </ligand>
</feature>
<feature type="binding site" evidence="1">
    <location>
        <position position="192"/>
    </location>
    <ligand>
        <name>substrate</name>
    </ligand>
</feature>
<feature type="binding site" evidence="1">
    <location>
        <position position="213"/>
    </location>
    <ligand>
        <name>substrate</name>
    </ligand>
</feature>